<feature type="chain" id="PRO_0000458074" description="Trimethylamine-oxide aldolase">
    <location>
        <begin position="1"/>
        <end position="789"/>
    </location>
</feature>
<organism>
    <name type="scientific">Ruegeria pomeroyi (strain ATCC 700808 / DSM 15171 / DSS-3)</name>
    <name type="common">Silicibacter pomeroyi</name>
    <dbReference type="NCBI Taxonomy" id="246200"/>
    <lineage>
        <taxon>Bacteria</taxon>
        <taxon>Pseudomonadati</taxon>
        <taxon>Pseudomonadota</taxon>
        <taxon>Alphaproteobacteria</taxon>
        <taxon>Rhodobacterales</taxon>
        <taxon>Roseobacteraceae</taxon>
        <taxon>Ruegeria</taxon>
    </lineage>
</organism>
<sequence>MLDTKYPEIIPGPPKPSAILQPRVFSLPPGTERYVVPGAGAILLRLETGDRIEIENTEGGQPCEIVCADLLGGFDAGLIGARAQGAPSGLMALLTSDDPSLRGLRMGIEARGLNLSQAGAVHLFEHSTPAGTTESFTASREGIVIIAAPGGIMDFQAQDTATPLTVFIRRAVLKSAARFELPDPLADPVADIRVHSATAEAYFVKAGDYIQILDVDGRQCTDFQCFAARKLDKGIAHALDVTTTRTLMGHAYPMPGLHAKYYDQEMQPLVEVIQDTCGRHDAFALACAAKYYDDIGYPGHINCSDNFNAALAPHGVAGRAGWMAINFFFNTGLDDHGVMYADEPWSRPGDYVLLRALTDLVCVSSACPDDTSAANGWNPTDIHVRTYSGKETFQRAVAYRPTPDAEPKMTKQTGFHDRFARFTENFIEYNGFWLANCMSTAGPIEEYHACREKCVVLDLSALRKFEITGPDSEALCQYIFTRNMKTLPVGGVVYTAMCYPHGGMIDDGTVFRLGKDNFRWIGGSDYGGEWIREKAAELGLKVLVRSSTDMQHNIAVQGPESRELLKKVIWTAPHQPKFEELGWFRFAPARIGDDQGVPVVVSRTGYTGELGYEIFCHPKHAGAVFDAVWEAGQAHGIRPMGLEALDMVRIEAGLIFAGYDFSDQTDPFEAGIGFTVPLKSKPDDFIGREALIRRKEHPARVLVGLDIDSNVDVGHGDCVHIGRAQIGEVTSSMRSPILGKNIALARVDVAHHEVGTRVEIGKLDGHQKRLPATIVPFAHYDPQKTRPRS</sequence>
<dbReference type="EC" id="4.1.2.32" evidence="1"/>
<dbReference type="EMBL" id="CP000031">
    <property type="protein sequence ID" value="AAV94849.2"/>
    <property type="molecule type" value="Genomic_DNA"/>
</dbReference>
<dbReference type="RefSeq" id="WP_030003205.1">
    <property type="nucleotide sequence ID" value="NC_003911.12"/>
</dbReference>
<dbReference type="SMR" id="Q5LT52"/>
<dbReference type="STRING" id="246200.SPO1562"/>
<dbReference type="PaxDb" id="246200-SPO1562"/>
<dbReference type="KEGG" id="sil:SPO1562"/>
<dbReference type="eggNOG" id="COG0404">
    <property type="taxonomic scope" value="Bacteria"/>
</dbReference>
<dbReference type="eggNOG" id="COG3665">
    <property type="taxonomic scope" value="Bacteria"/>
</dbReference>
<dbReference type="HOGENOM" id="CLU_019604_0_0_5"/>
<dbReference type="OrthoDB" id="9772660at2"/>
<dbReference type="BioCyc" id="MetaCyc:MONOMER-18535"/>
<dbReference type="Proteomes" id="UP000001023">
    <property type="component" value="Chromosome"/>
</dbReference>
<dbReference type="GO" id="GO:0005829">
    <property type="term" value="C:cytosol"/>
    <property type="evidence" value="ECO:0007669"/>
    <property type="project" value="TreeGrafter"/>
</dbReference>
<dbReference type="GO" id="GO:0016829">
    <property type="term" value="F:lyase activity"/>
    <property type="evidence" value="ECO:0007669"/>
    <property type="project" value="UniProtKB-KW"/>
</dbReference>
<dbReference type="Gene3D" id="3.30.1360.120">
    <property type="entry name" value="Probable tRNA modification gtpase trme, domain 1"/>
    <property type="match status" value="1"/>
</dbReference>
<dbReference type="InterPro" id="IPR018959">
    <property type="entry name" value="DUF1989"/>
</dbReference>
<dbReference type="InterPro" id="IPR013977">
    <property type="entry name" value="GCST_C"/>
</dbReference>
<dbReference type="InterPro" id="IPR006222">
    <property type="entry name" value="GCV_T_N"/>
</dbReference>
<dbReference type="InterPro" id="IPR028896">
    <property type="entry name" value="GcvT/YgfZ/DmdA"/>
</dbReference>
<dbReference type="InterPro" id="IPR029043">
    <property type="entry name" value="GcvT/YgfZ_C"/>
</dbReference>
<dbReference type="InterPro" id="IPR027266">
    <property type="entry name" value="TrmE/GcvT_dom1"/>
</dbReference>
<dbReference type="PANTHER" id="PTHR43757">
    <property type="entry name" value="AMINOMETHYLTRANSFERASE"/>
    <property type="match status" value="1"/>
</dbReference>
<dbReference type="PANTHER" id="PTHR43757:SF2">
    <property type="entry name" value="AMINOMETHYLTRANSFERASE, MITOCHONDRIAL"/>
    <property type="match status" value="1"/>
</dbReference>
<dbReference type="Pfam" id="PF09347">
    <property type="entry name" value="DUF1989"/>
    <property type="match status" value="1"/>
</dbReference>
<dbReference type="Pfam" id="PF01571">
    <property type="entry name" value="GCV_T"/>
    <property type="match status" value="1"/>
</dbReference>
<dbReference type="Pfam" id="PF08669">
    <property type="entry name" value="GCV_T_C"/>
    <property type="match status" value="1"/>
</dbReference>
<dbReference type="SUPFAM" id="SSF101790">
    <property type="entry name" value="Aminomethyltransferase beta-barrel domain"/>
    <property type="match status" value="1"/>
</dbReference>
<dbReference type="SUPFAM" id="SSF103025">
    <property type="entry name" value="Folate-binding domain"/>
    <property type="match status" value="1"/>
</dbReference>
<name>TDM_RUEPO</name>
<reference key="1">
    <citation type="journal article" date="2004" name="Nature">
        <title>Genome sequence of Silicibacter pomeroyi reveals adaptations to the marine environment.</title>
        <authorList>
            <person name="Moran M.A."/>
            <person name="Buchan A."/>
            <person name="Gonzalez J.M."/>
            <person name="Heidelberg J.F."/>
            <person name="Whitman W.B."/>
            <person name="Kiene R.P."/>
            <person name="Henriksen J.R."/>
            <person name="King G.M."/>
            <person name="Belas R."/>
            <person name="Fuqua C."/>
            <person name="Brinkac L.M."/>
            <person name="Lewis M."/>
            <person name="Johri S."/>
            <person name="Weaver B."/>
            <person name="Pai G."/>
            <person name="Eisen J.A."/>
            <person name="Rahe E."/>
            <person name="Sheldon W.M."/>
            <person name="Ye W."/>
            <person name="Miller T.R."/>
            <person name="Carlton J."/>
            <person name="Rasko D.A."/>
            <person name="Paulsen I.T."/>
            <person name="Ren Q."/>
            <person name="Daugherty S.C."/>
            <person name="DeBoy R.T."/>
            <person name="Dodson R.J."/>
            <person name="Durkin A.S."/>
            <person name="Madupu R."/>
            <person name="Nelson W.C."/>
            <person name="Sullivan S.A."/>
            <person name="Rosovitz M.J."/>
            <person name="Haft D.H."/>
            <person name="Selengut J."/>
            <person name="Ward N."/>
        </authorList>
    </citation>
    <scope>NUCLEOTIDE SEQUENCE [LARGE SCALE GENOMIC DNA]</scope>
    <source>
        <strain>ATCC 700808 / DSM 15171 / DSS-3</strain>
    </source>
</reference>
<reference key="2">
    <citation type="journal article" date="2014" name="Stand. Genomic Sci.">
        <title>An updated genome annotation for the model marine bacterium Ruegeria pomeroyi DSS-3.</title>
        <authorList>
            <person name="Rivers A.R."/>
            <person name="Smith C.B."/>
            <person name="Moran M.A."/>
        </authorList>
    </citation>
    <scope>GENOME REANNOTATION</scope>
    <source>
        <strain>ATCC 700808 / DSM 15171 / DSS-3</strain>
    </source>
</reference>
<reference key="3">
    <citation type="journal article" date="2014" name="Proc. Natl. Acad. Sci. U.S.A.">
        <title>Trimethylamine N-oxide metabolism by abundant marine heterotrophic bacteria.</title>
        <authorList>
            <person name="Lidbury I."/>
            <person name="Murrell J.C."/>
            <person name="Chen Y."/>
        </authorList>
    </citation>
    <scope>FUNCTION</scope>
    <scope>CATALYTIC ACTIVITY</scope>
    <scope>DISRUPTION PHENOTYPE</scope>
    <source>
        <strain>ATCC 700808 / DSM 15171 / DSS-3</strain>
    </source>
</reference>
<comment type="function">
    <text evidence="1">Catalyzes the conversion of trimethylamine N-oxide (TMAO) to dimethylamine (DMA) and formaldehyde.</text>
</comment>
<comment type="catalytic activity">
    <reaction evidence="1">
        <text>trimethylamine N-oxide + H(+) = dimethylamine + formaldehyde</text>
        <dbReference type="Rhea" id="RHEA:20217"/>
        <dbReference type="ChEBI" id="CHEBI:15378"/>
        <dbReference type="ChEBI" id="CHEBI:15724"/>
        <dbReference type="ChEBI" id="CHEBI:16842"/>
        <dbReference type="ChEBI" id="CHEBI:58040"/>
        <dbReference type="EC" id="4.1.2.32"/>
    </reaction>
    <physiologicalReaction direction="left-to-right" evidence="1">
        <dbReference type="Rhea" id="RHEA:20218"/>
    </physiologicalReaction>
</comment>
<comment type="disruption phenotype">
    <text evidence="1">Disruption mutant cannot grow on TMAO or its upstream precursor trimethylamine (TMA) as a sole nitrogen source, although it can grow on dimethylamine (DMA) and monomethylamine (MMA).</text>
</comment>
<comment type="similarity">
    <text evidence="3">In the C-terminal section; belongs to the GcvT family.</text>
</comment>
<gene>
    <name evidence="2" type="primary">tdm</name>
    <name evidence="4" type="ordered locus">SPO1562</name>
</gene>
<proteinExistence type="evidence at protein level"/>
<protein>
    <recommendedName>
        <fullName evidence="3">Trimethylamine-oxide aldolase</fullName>
        <ecNumber evidence="1">4.1.2.32</ecNumber>
    </recommendedName>
    <alternativeName>
        <fullName evidence="3">Trimethylamine N-oxide demethylase</fullName>
        <shortName evidence="2">TMAO demethylase</shortName>
        <shortName evidence="2">Tdm</shortName>
    </alternativeName>
</protein>
<accession>Q5LT52</accession>
<keyword id="KW-0456">Lyase</keyword>
<keyword id="KW-1185">Reference proteome</keyword>
<evidence type="ECO:0000269" key="1">
    <source>
    </source>
</evidence>
<evidence type="ECO:0000303" key="2">
    <source>
    </source>
</evidence>
<evidence type="ECO:0000305" key="3"/>
<evidence type="ECO:0000312" key="4">
    <source>
        <dbReference type="EMBL" id="AAV94849.2"/>
    </source>
</evidence>